<accession>P01222</accession>
<accession>B1AKP0</accession>
<accession>Q16163</accession>
<sequence length="138" mass="15639">MTALFLMSMLFGLTCGQAMSFCIPTEYTMHIERRECAYCLTINTTICAGYCMTRDINGKLFLPKYALSQDVCTYRDFIYRTVEIPGCPLHVAPYFSYPVALSCKCGKCNTDYSDCIHEAIKTNYCTKPQKSYLVGFSV</sequence>
<keyword id="KW-0002">3D-structure</keyword>
<keyword id="KW-0025">Alternative splicing</keyword>
<keyword id="KW-0984">Congenital hypothyroidism</keyword>
<keyword id="KW-0903">Direct protein sequencing</keyword>
<keyword id="KW-0225">Disease variant</keyword>
<keyword id="KW-1015">Disulfide bond</keyword>
<keyword id="KW-0325">Glycoprotein</keyword>
<keyword id="KW-0372">Hormone</keyword>
<keyword id="KW-0582">Pharmaceutical</keyword>
<keyword id="KW-1267">Proteomics identification</keyword>
<keyword id="KW-1185">Reference proteome</keyword>
<keyword id="KW-0964">Secreted</keyword>
<keyword id="KW-0732">Signal</keyword>
<name>TSHB_HUMAN</name>
<reference key="1">
    <citation type="journal article" date="1985" name="FEBS Lett.">
        <title>Molecular cloning of the human thyrotropin-beta subunit gene.</title>
        <authorList>
            <person name="Hayashizaki Y."/>
            <person name="Miyai K."/>
            <person name="Kato K."/>
            <person name="Matsubara K."/>
        </authorList>
    </citation>
    <scope>NUCLEOTIDE SEQUENCE [GENOMIC DNA]</scope>
    <scope>VARIANT ALA-14</scope>
</reference>
<reference key="2">
    <citation type="journal article" date="1988" name="DNA">
        <title>The human thyrotropin beta-subunit gene differs in 5' structure from murine TSH-beta genes.</title>
        <authorList>
            <person name="Guidon P.T. Jr."/>
            <person name="Whitfield G.K."/>
            <person name="Porti D."/>
            <person name="Kourides I.A."/>
        </authorList>
    </citation>
    <scope>NUCLEOTIDE SEQUENCE [GENOMIC DNA]</scope>
    <scope>VARIANT ALA-14</scope>
</reference>
<reference key="3">
    <citation type="journal article" date="1988" name="Gene">
        <title>The structure of the human thyrotropin beta-subunit gene.</title>
        <authorList>
            <person name="Tatsumi K."/>
            <person name="Hayashizaki Y."/>
            <person name="Hiraoka Y."/>
            <person name="Miyai K."/>
            <person name="Matsubara K."/>
        </authorList>
    </citation>
    <scope>NUCLEOTIDE SEQUENCE [GENOMIC DNA]</scope>
    <scope>VARIANT ALA-14</scope>
</reference>
<reference key="4">
    <citation type="journal article" date="1988" name="J. Biol. Chem.">
        <title>Isolation and characterization of the human thyrotropin beta-subunit gene. Differences in gene structure and promoter function from murine species.</title>
        <authorList>
            <person name="Wondisford F.E."/>
            <person name="Radovick S."/>
            <person name="Moates J.M."/>
            <person name="Usala S.J."/>
            <person name="Weintraub B.D."/>
        </authorList>
    </citation>
    <scope>NUCLEOTIDE SEQUENCE [GENOMIC DNA]</scope>
    <scope>VARIANT ALA-14</scope>
</reference>
<reference key="5">
    <citation type="journal article" date="1994" name="Nippon Rinsho">
        <title>Structure and regulation of human thyroid-stimulating hormone (TSH) gene.</title>
        <authorList>
            <person name="Miyoshi I."/>
            <person name="Kasai N."/>
            <person name="Hayashizaki Y."/>
        </authorList>
    </citation>
    <scope>NUCLEOTIDE SEQUENCE [GENOMIC DNA]</scope>
    <scope>VARIANT ALA-14</scope>
</reference>
<reference key="6">
    <citation type="journal article" date="2006" name="Nature">
        <title>The DNA sequence and biological annotation of human chromosome 1.</title>
        <authorList>
            <person name="Gregory S.G."/>
            <person name="Barlow K.F."/>
            <person name="McLay K.E."/>
            <person name="Kaul R."/>
            <person name="Swarbreck D."/>
            <person name="Dunham A."/>
            <person name="Scott C.E."/>
            <person name="Howe K.L."/>
            <person name="Woodfine K."/>
            <person name="Spencer C.C.A."/>
            <person name="Jones M.C."/>
            <person name="Gillson C."/>
            <person name="Searle S."/>
            <person name="Zhou Y."/>
            <person name="Kokocinski F."/>
            <person name="McDonald L."/>
            <person name="Evans R."/>
            <person name="Phillips K."/>
            <person name="Atkinson A."/>
            <person name="Cooper R."/>
            <person name="Jones C."/>
            <person name="Hall R.E."/>
            <person name="Andrews T.D."/>
            <person name="Lloyd C."/>
            <person name="Ainscough R."/>
            <person name="Almeida J.P."/>
            <person name="Ambrose K.D."/>
            <person name="Anderson F."/>
            <person name="Andrew R.W."/>
            <person name="Ashwell R.I.S."/>
            <person name="Aubin K."/>
            <person name="Babbage A.K."/>
            <person name="Bagguley C.L."/>
            <person name="Bailey J."/>
            <person name="Beasley H."/>
            <person name="Bethel G."/>
            <person name="Bird C.P."/>
            <person name="Bray-Allen S."/>
            <person name="Brown J.Y."/>
            <person name="Brown A.J."/>
            <person name="Buckley D."/>
            <person name="Burton J."/>
            <person name="Bye J."/>
            <person name="Carder C."/>
            <person name="Chapman J.C."/>
            <person name="Clark S.Y."/>
            <person name="Clarke G."/>
            <person name="Clee C."/>
            <person name="Cobley V."/>
            <person name="Collier R.E."/>
            <person name="Corby N."/>
            <person name="Coville G.J."/>
            <person name="Davies J."/>
            <person name="Deadman R."/>
            <person name="Dunn M."/>
            <person name="Earthrowl M."/>
            <person name="Ellington A.G."/>
            <person name="Errington H."/>
            <person name="Frankish A."/>
            <person name="Frankland J."/>
            <person name="French L."/>
            <person name="Garner P."/>
            <person name="Garnett J."/>
            <person name="Gay L."/>
            <person name="Ghori M.R.J."/>
            <person name="Gibson R."/>
            <person name="Gilby L.M."/>
            <person name="Gillett W."/>
            <person name="Glithero R.J."/>
            <person name="Grafham D.V."/>
            <person name="Griffiths C."/>
            <person name="Griffiths-Jones S."/>
            <person name="Grocock R."/>
            <person name="Hammond S."/>
            <person name="Harrison E.S.I."/>
            <person name="Hart E."/>
            <person name="Haugen E."/>
            <person name="Heath P.D."/>
            <person name="Holmes S."/>
            <person name="Holt K."/>
            <person name="Howden P.J."/>
            <person name="Hunt A.R."/>
            <person name="Hunt S.E."/>
            <person name="Hunter G."/>
            <person name="Isherwood J."/>
            <person name="James R."/>
            <person name="Johnson C."/>
            <person name="Johnson D."/>
            <person name="Joy A."/>
            <person name="Kay M."/>
            <person name="Kershaw J.K."/>
            <person name="Kibukawa M."/>
            <person name="Kimberley A.M."/>
            <person name="King A."/>
            <person name="Knights A.J."/>
            <person name="Lad H."/>
            <person name="Laird G."/>
            <person name="Lawlor S."/>
            <person name="Leongamornlert D.A."/>
            <person name="Lloyd D.M."/>
            <person name="Loveland J."/>
            <person name="Lovell J."/>
            <person name="Lush M.J."/>
            <person name="Lyne R."/>
            <person name="Martin S."/>
            <person name="Mashreghi-Mohammadi M."/>
            <person name="Matthews L."/>
            <person name="Matthews N.S.W."/>
            <person name="McLaren S."/>
            <person name="Milne S."/>
            <person name="Mistry S."/>
            <person name="Moore M.J.F."/>
            <person name="Nickerson T."/>
            <person name="O'Dell C.N."/>
            <person name="Oliver K."/>
            <person name="Palmeiri A."/>
            <person name="Palmer S.A."/>
            <person name="Parker A."/>
            <person name="Patel D."/>
            <person name="Pearce A.V."/>
            <person name="Peck A.I."/>
            <person name="Pelan S."/>
            <person name="Phelps K."/>
            <person name="Phillimore B.J."/>
            <person name="Plumb R."/>
            <person name="Rajan J."/>
            <person name="Raymond C."/>
            <person name="Rouse G."/>
            <person name="Saenphimmachak C."/>
            <person name="Sehra H.K."/>
            <person name="Sheridan E."/>
            <person name="Shownkeen R."/>
            <person name="Sims S."/>
            <person name="Skuce C.D."/>
            <person name="Smith M."/>
            <person name="Steward C."/>
            <person name="Subramanian S."/>
            <person name="Sycamore N."/>
            <person name="Tracey A."/>
            <person name="Tromans A."/>
            <person name="Van Helmond Z."/>
            <person name="Wall M."/>
            <person name="Wallis J.M."/>
            <person name="White S."/>
            <person name="Whitehead S.L."/>
            <person name="Wilkinson J.E."/>
            <person name="Willey D.L."/>
            <person name="Williams H."/>
            <person name="Wilming L."/>
            <person name="Wray P.W."/>
            <person name="Wu Z."/>
            <person name="Coulson A."/>
            <person name="Vaudin M."/>
            <person name="Sulston J.E."/>
            <person name="Durbin R.M."/>
            <person name="Hubbard T."/>
            <person name="Wooster R."/>
            <person name="Dunham I."/>
            <person name="Carter N.P."/>
            <person name="McVean G."/>
            <person name="Ross M.T."/>
            <person name="Harrow J."/>
            <person name="Olson M.V."/>
            <person name="Beck S."/>
            <person name="Rogers J."/>
            <person name="Bentley D.R."/>
        </authorList>
    </citation>
    <scope>NUCLEOTIDE SEQUENCE [LARGE SCALE GENOMIC DNA]</scope>
</reference>
<reference key="7">
    <citation type="journal article" date="2004" name="Genome Res.">
        <title>The status, quality, and expansion of the NIH full-length cDNA project: the Mammalian Gene Collection (MGC).</title>
        <authorList>
            <consortium name="The MGC Project Team"/>
        </authorList>
    </citation>
    <scope>NUCLEOTIDE SEQUENCE [LARGE SCALE MRNA] (ISOFORM 1)</scope>
    <scope>VARIANT ALA-14</scope>
</reference>
<reference key="8">
    <citation type="journal article" date="2009" name="Gen. Comp. Endocrinol.">
        <title>A novel thyroid stimulating hormone beta-subunit isoform in human pituitary, peripheral blood leukocytes, and thyroid.</title>
        <authorList>
            <person name="Schaefer J.S."/>
            <person name="Klein J.R."/>
        </authorList>
    </citation>
    <scope>NUCLEOTIDE SEQUENCE [MRNA] (ISOFORM 2)</scope>
</reference>
<reference key="9">
    <citation type="journal article" date="1977" name="Can. J. Biochem.">
        <title>Human pituitary thyrotropin. The primary structure of the alpha and beta subunits.</title>
        <authorList>
            <person name="Sairam M.R."/>
            <person name="Li C.H."/>
        </authorList>
    </citation>
    <scope>PROTEIN SEQUENCE OF 21-132</scope>
</reference>
<reference key="10">
    <citation type="journal article" date="1990" name="Am. J. Hum. Genet.">
        <title>Familial hypothyroidism caused by a nonsense mutation in the thyroid-stimulating hormone beta-subunit gene.</title>
        <authorList>
            <person name="Dacou-Voutetakis C."/>
            <person name="Feltquate D.M."/>
            <person name="Drakopoulou M."/>
            <person name="Kourides I.A."/>
            <person name="Dracopoli N.C."/>
        </authorList>
    </citation>
    <scope>INVOLVEMENT IN CHNG4</scope>
    <scope>VARIANT CHNG4 32-GLU--VAL-138 DEL</scope>
</reference>
<reference key="11">
    <citation type="journal article" date="2002" name="J. Clin. Endocrinol. Metab.">
        <title>Congenital central hypothyroidism due to homozygous thyrotropin beta 313 Delta T mutation is caused by a Founder effect.</title>
        <authorList>
            <person name="Brumm H."/>
            <person name="Pfeufer A."/>
            <person name="Biebermann H."/>
            <person name="Schnabel D."/>
            <person name="Deiss D."/>
            <person name="Grueters A."/>
        </authorList>
    </citation>
    <scope>INVOLVEMENT IN CHNG4</scope>
</reference>
<reference key="12">
    <citation type="journal article" date="2022" name="Endocrinol. Diabetes Metab. Case Rep.">
        <title>Novel TSHB variant (c.217A&gt;C) causing severe central hypothyroidism and pituitary hyperplasia.</title>
        <authorList>
            <person name="Kaplan A.I."/>
            <person name="Luxford C."/>
            <person name="Clifton-Bligh R.J."/>
        </authorList>
    </citation>
    <scope>VARIANT CHNG4 PRO-73</scope>
</reference>
<evidence type="ECO:0000250" key="1"/>
<evidence type="ECO:0000269" key="2">
    <source>
    </source>
</evidence>
<evidence type="ECO:0000269" key="3">
    <source>
    </source>
</evidence>
<evidence type="ECO:0000269" key="4">
    <source>
    </source>
</evidence>
<evidence type="ECO:0000269" key="5">
    <source>
    </source>
</evidence>
<evidence type="ECO:0000269" key="6">
    <source>
    </source>
</evidence>
<evidence type="ECO:0000269" key="7">
    <source>
    </source>
</evidence>
<evidence type="ECO:0000269" key="8">
    <source>
    </source>
</evidence>
<evidence type="ECO:0000269" key="9">
    <source>
    </source>
</evidence>
<evidence type="ECO:0000269" key="10">
    <source>
    </source>
</evidence>
<evidence type="ECO:0000269" key="11">
    <source>
    </source>
</evidence>
<evidence type="ECO:0000303" key="12">
    <source>
    </source>
</evidence>
<evidence type="ECO:0000305" key="13"/>
<evidence type="ECO:0007829" key="14">
    <source>
        <dbReference type="PDB" id="7UTZ"/>
    </source>
</evidence>
<feature type="signal peptide" evidence="11">
    <location>
        <begin position="1"/>
        <end position="20"/>
    </location>
</feature>
<feature type="chain" id="PRO_0000011746" description="Thyrotropin subunit beta">
    <location>
        <begin position="21"/>
        <end position="132"/>
    </location>
</feature>
<feature type="propeptide" id="PRO_0000011747">
    <location>
        <begin position="133"/>
        <end position="138"/>
    </location>
</feature>
<feature type="glycosylation site" description="N-linked (GlcNAc...) asparagine">
    <location>
        <position position="43"/>
    </location>
</feature>
<feature type="disulfide bond" evidence="1">
    <location>
        <begin position="22"/>
        <end position="72"/>
    </location>
</feature>
<feature type="disulfide bond" evidence="1">
    <location>
        <begin position="36"/>
        <end position="87"/>
    </location>
</feature>
<feature type="disulfide bond" evidence="1">
    <location>
        <begin position="39"/>
        <end position="125"/>
    </location>
</feature>
<feature type="disulfide bond" evidence="1">
    <location>
        <begin position="47"/>
        <end position="103"/>
    </location>
</feature>
<feature type="disulfide bond" evidence="1">
    <location>
        <begin position="51"/>
        <end position="105"/>
    </location>
</feature>
<feature type="disulfide bond" evidence="1">
    <location>
        <begin position="108"/>
        <end position="115"/>
    </location>
</feature>
<feature type="splice variant" id="VSP_053387" description="In isoform 2." evidence="12">
    <original>MTALFLMSMLFGLTCGQAMSFCIPTEYTMHIERRECAYCLTINTTICAGYCMTR</original>
    <variation>MLSFLFFPQ</variation>
    <location>
        <begin position="1"/>
        <end position="54"/>
    </location>
</feature>
<feature type="sequence variant" id="VAR_054769" description="In dbSNP:rs10776792." evidence="3 5 6 7 9 10">
    <original>T</original>
    <variation>A</variation>
    <location>
        <position position="14"/>
    </location>
</feature>
<feature type="sequence variant" id="VAR_087375" description="In CHNG4." evidence="4">
    <location>
        <begin position="32"/>
        <end position="138"/>
    </location>
</feature>
<feature type="sequence variant" id="VAR_087376" description="In CHNG4." evidence="8">
    <original>T</original>
    <variation>P</variation>
    <location>
        <position position="73"/>
    </location>
</feature>
<feature type="sequence conflict" description="In Ref. 5; AAB30828." evidence="13" ref="5">
    <original>I</original>
    <variation>M</variation>
    <location>
        <position position="46"/>
    </location>
</feature>
<feature type="strand" evidence="14">
    <location>
        <begin position="23"/>
        <end position="31"/>
    </location>
</feature>
<feature type="strand" evidence="14">
    <location>
        <begin position="40"/>
        <end position="52"/>
    </location>
</feature>
<feature type="turn" evidence="14">
    <location>
        <begin position="59"/>
        <end position="61"/>
    </location>
</feature>
<feature type="helix" evidence="14">
    <location>
        <begin position="64"/>
        <end position="67"/>
    </location>
</feature>
<feature type="strand" evidence="14">
    <location>
        <begin position="71"/>
        <end position="83"/>
    </location>
</feature>
<feature type="strand" evidence="14">
    <location>
        <begin position="94"/>
        <end position="106"/>
    </location>
</feature>
<feature type="turn" evidence="14">
    <location>
        <begin position="110"/>
        <end position="112"/>
    </location>
</feature>
<feature type="strand" evidence="14">
    <location>
        <begin position="113"/>
        <end position="118"/>
    </location>
</feature>
<proteinExistence type="evidence at protein level"/>
<gene>
    <name type="primary">TSHB</name>
</gene>
<comment type="function">
    <text>Indispensable for the control of thyroid structure and metabolism.</text>
</comment>
<comment type="subunit">
    <text>Heterodimer of a common alpha chain and a unique beta chain which confers biological specificity to thyrotropin, lutropin, follitropin and gonadotropin.</text>
</comment>
<comment type="subcellular location">
    <subcellularLocation>
        <location>Secreted</location>
    </subcellularLocation>
</comment>
<comment type="alternative products">
    <event type="alternative splicing"/>
    <isoform>
        <id>P01222-1</id>
        <name>1</name>
        <sequence type="displayed"/>
    </isoform>
    <isoform>
        <id>P01222-2</id>
        <name>2</name>
        <sequence type="described" ref="VSP_053387"/>
    </isoform>
</comment>
<comment type="disease" evidence="2 4 8">
    <disease id="DI-06483">
        <name>Hypothyroidism, congenital, non-goitrous, 4</name>
        <acronym>CHNG4</acronym>
        <description>A form of central hypothyroidism, a disorder characterized by insufficient stimulation by thyroid stimulating hormone of an otherwise normal thyroid gland. CHNG4 is an autosomal recessive form characterized by isolated thyrotropin deficiency that, if untreated, results in severe growth retardation and intellectual disability.</description>
        <dbReference type="MIM" id="275100"/>
    </disease>
    <text>The disease is caused by variants affecting the gene represented in this entry.</text>
</comment>
<comment type="pharmaceutical">
    <text>Available under the name Thyrogen (Genzyme). Used in combination with other tests to detect recurring or leftover thyroid cancer cells in patients with a history of certain types of thyroid cancer.</text>
</comment>
<comment type="miscellaneous">
    <molecule>Isoform 2</molecule>
    <text evidence="13">Major isoform in peripheral blood leukocytes and thyroid, may form heterodimers with isoform 1.</text>
</comment>
<comment type="similarity">
    <text evidence="13">Belongs to the glycoprotein hormones subunit beta family.</text>
</comment>
<comment type="online information" name="Wikipedia">
    <link uri="https://en.wikipedia.org/wiki/Thyroid-stimulating_hormone"/>
    <text>Thyroid-stimulating hormone entry</text>
</comment>
<organism>
    <name type="scientific">Homo sapiens</name>
    <name type="common">Human</name>
    <dbReference type="NCBI Taxonomy" id="9606"/>
    <lineage>
        <taxon>Eukaryota</taxon>
        <taxon>Metazoa</taxon>
        <taxon>Chordata</taxon>
        <taxon>Craniata</taxon>
        <taxon>Vertebrata</taxon>
        <taxon>Euteleostomi</taxon>
        <taxon>Mammalia</taxon>
        <taxon>Eutheria</taxon>
        <taxon>Euarchontoglires</taxon>
        <taxon>Primates</taxon>
        <taxon>Haplorrhini</taxon>
        <taxon>Catarrhini</taxon>
        <taxon>Hominidae</taxon>
        <taxon>Homo</taxon>
    </lineage>
</organism>
<protein>
    <recommendedName>
        <fullName>Thyrotropin subunit beta</fullName>
    </recommendedName>
    <alternativeName>
        <fullName>Thyroid-stimulating hormone subunit beta</fullName>
        <shortName>TSH-B</shortName>
        <shortName>TSH-beta</shortName>
    </alternativeName>
    <alternativeName>
        <fullName>Thyrotropin beta chain</fullName>
    </alternativeName>
    <innName>Thyrotropin alfa</innName>
</protein>
<dbReference type="EMBL" id="X02866">
    <property type="protein sequence ID" value="CAA26618.1"/>
    <property type="molecule type" value="Genomic_DNA"/>
</dbReference>
<dbReference type="EMBL" id="X02867">
    <property type="protein sequence ID" value="CAA26619.1"/>
    <property type="molecule type" value="Genomic_DNA"/>
</dbReference>
<dbReference type="EMBL" id="M23671">
    <property type="protein sequence ID" value="AAB05845.1"/>
    <property type="molecule type" value="Genomic_DNA"/>
</dbReference>
<dbReference type="EMBL" id="M23670">
    <property type="protein sequence ID" value="AAB05845.1"/>
    <property type="status" value="JOINED"/>
    <property type="molecule type" value="Genomic_DNA"/>
</dbReference>
<dbReference type="EMBL" id="M25164">
    <property type="protein sequence ID" value="AAA61235.1"/>
    <property type="molecule type" value="Genomic_DNA"/>
</dbReference>
<dbReference type="EMBL" id="M21024">
    <property type="protein sequence ID" value="AAA36782.1"/>
    <property type="molecule type" value="Genomic_DNA"/>
</dbReference>
<dbReference type="EMBL" id="S70587">
    <property type="protein sequence ID" value="AAB30828.2"/>
    <property type="molecule type" value="Genomic_DNA"/>
</dbReference>
<dbReference type="EMBL" id="AL109660">
    <property type="status" value="NOT_ANNOTATED_CDS"/>
    <property type="molecule type" value="Genomic_DNA"/>
</dbReference>
<dbReference type="EMBL" id="BC069298">
    <property type="protein sequence ID" value="AAH69298.1"/>
    <property type="molecule type" value="mRNA"/>
</dbReference>
<dbReference type="CCDS" id="CCDS880.1">
    <molecule id="P01222-1"/>
</dbReference>
<dbReference type="PIR" id="A23997">
    <property type="entry name" value="TTHUB"/>
</dbReference>
<dbReference type="RefSeq" id="NP_000540.2">
    <molecule id="P01222-1"/>
    <property type="nucleotide sequence ID" value="NM_000549.5"/>
</dbReference>
<dbReference type="RefSeq" id="NP_001264920.1">
    <molecule id="P01222-2"/>
    <property type="nucleotide sequence ID" value="NM_001277991.1"/>
</dbReference>
<dbReference type="RefSeq" id="XP_011540367.1">
    <property type="nucleotide sequence ID" value="XM_011542065.2"/>
</dbReference>
<dbReference type="PDB" id="7T9I">
    <property type="method" value="EM"/>
    <property type="resolution" value="2.90 A"/>
    <property type="chains" value="B=21-132"/>
</dbReference>
<dbReference type="PDB" id="7UTZ">
    <property type="method" value="EM"/>
    <property type="resolution" value="2.40 A"/>
    <property type="chains" value="B=21-132"/>
</dbReference>
<dbReference type="PDB" id="7XW5">
    <property type="method" value="EM"/>
    <property type="resolution" value="2.96 A"/>
    <property type="chains" value="Y=21-138"/>
</dbReference>
<dbReference type="PDBsum" id="7T9I"/>
<dbReference type="PDBsum" id="7UTZ"/>
<dbReference type="PDBsum" id="7XW5"/>
<dbReference type="EMDB" id="EMD-25758"/>
<dbReference type="EMDB" id="EMD-26795"/>
<dbReference type="EMDB" id="EMD-33491"/>
<dbReference type="SMR" id="P01222"/>
<dbReference type="BioGRID" id="113103">
    <property type="interactions" value="51"/>
</dbReference>
<dbReference type="ComplexPortal" id="CPX-6096">
    <property type="entry name" value="Thyroid-stimulating hormone complex"/>
</dbReference>
<dbReference type="FunCoup" id="P01222">
    <property type="interactions" value="608"/>
</dbReference>
<dbReference type="IntAct" id="P01222">
    <property type="interactions" value="16"/>
</dbReference>
<dbReference type="STRING" id="9606.ENSP00000256592"/>
<dbReference type="GlyCosmos" id="P01222">
    <property type="glycosylation" value="1 site, 7 glycans"/>
</dbReference>
<dbReference type="GlyGen" id="P01222">
    <property type="glycosylation" value="1 site, 7 N-linked glycans (1 site)"/>
</dbReference>
<dbReference type="iPTMnet" id="P01222"/>
<dbReference type="BioMuta" id="TSHB"/>
<dbReference type="DMDM" id="311033515"/>
<dbReference type="CPTAC" id="CPTAC-691"/>
<dbReference type="CPTAC" id="CPTAC-729"/>
<dbReference type="MassIVE" id="P01222"/>
<dbReference type="PaxDb" id="9606-ENSP00000256592"/>
<dbReference type="PeptideAtlas" id="P01222"/>
<dbReference type="Antibodypedia" id="20170">
    <property type="antibodies" value="1094 antibodies from 42 providers"/>
</dbReference>
<dbReference type="CPTC" id="P01222">
    <property type="antibodies" value="2 antibodies"/>
</dbReference>
<dbReference type="DNASU" id="7252"/>
<dbReference type="Ensembl" id="ENST00000256592.3">
    <molecule id="P01222-1"/>
    <property type="protein sequence ID" value="ENSP00000256592.1"/>
    <property type="gene ID" value="ENSG00000134200.4"/>
</dbReference>
<dbReference type="GeneID" id="7252"/>
<dbReference type="KEGG" id="hsa:7252"/>
<dbReference type="MANE-Select" id="ENST00000256592.3">
    <property type="protein sequence ID" value="ENSP00000256592.1"/>
    <property type="RefSeq nucleotide sequence ID" value="NM_000549.5"/>
    <property type="RefSeq protein sequence ID" value="NP_000540.2"/>
</dbReference>
<dbReference type="UCSC" id="uc001efs.2">
    <molecule id="P01222-1"/>
    <property type="organism name" value="human"/>
</dbReference>
<dbReference type="AGR" id="HGNC:12372"/>
<dbReference type="CTD" id="7252"/>
<dbReference type="DisGeNET" id="7252"/>
<dbReference type="GeneCards" id="TSHB"/>
<dbReference type="HGNC" id="HGNC:12372">
    <property type="gene designation" value="TSHB"/>
</dbReference>
<dbReference type="HPA" id="ENSG00000134200">
    <property type="expression patterns" value="Tissue enriched (pituitary)"/>
</dbReference>
<dbReference type="MalaCards" id="TSHB"/>
<dbReference type="MIM" id="188540">
    <property type="type" value="gene"/>
</dbReference>
<dbReference type="MIM" id="275100">
    <property type="type" value="phenotype"/>
</dbReference>
<dbReference type="neXtProt" id="NX_P01222"/>
<dbReference type="OpenTargets" id="ENSG00000134200"/>
<dbReference type="Orphanet" id="90674">
    <property type="disease" value="Isolated thyroid-stimulating hormone deficiency"/>
</dbReference>
<dbReference type="PharmGKB" id="PA37041"/>
<dbReference type="VEuPathDB" id="HostDB:ENSG00000134200"/>
<dbReference type="eggNOG" id="ENOG502S2JW">
    <property type="taxonomic scope" value="Eukaryota"/>
</dbReference>
<dbReference type="GeneTree" id="ENSGT00940000158152"/>
<dbReference type="HOGENOM" id="CLU_126319_0_2_1"/>
<dbReference type="InParanoid" id="P01222"/>
<dbReference type="OMA" id="PTEYMMH"/>
<dbReference type="OrthoDB" id="8866353at2759"/>
<dbReference type="PAN-GO" id="P01222">
    <property type="GO annotations" value="3 GO annotations based on evolutionary models"/>
</dbReference>
<dbReference type="PhylomeDB" id="P01222"/>
<dbReference type="TreeFam" id="TF332940"/>
<dbReference type="PathwayCommons" id="P01222"/>
<dbReference type="Reactome" id="R-HSA-209822">
    <property type="pathway name" value="Glycoprotein hormones"/>
</dbReference>
<dbReference type="Reactome" id="R-HSA-209968">
    <property type="pathway name" value="Thyroxine biosynthesis"/>
</dbReference>
<dbReference type="Reactome" id="R-HSA-375281">
    <property type="pathway name" value="Hormone ligand-binding receptors"/>
</dbReference>
<dbReference type="Reactome" id="R-HSA-418555">
    <property type="pathway name" value="G alpha (s) signalling events"/>
</dbReference>
<dbReference type="SignaLink" id="P01222"/>
<dbReference type="SIGNOR" id="P01222"/>
<dbReference type="BioGRID-ORCS" id="7252">
    <property type="hits" value="21 hits in 1106 CRISPR screens"/>
</dbReference>
<dbReference type="GeneWiki" id="TSHB"/>
<dbReference type="GenomeRNAi" id="7252"/>
<dbReference type="Pharos" id="P01222">
    <property type="development level" value="Tbio"/>
</dbReference>
<dbReference type="PRO" id="PR:P01222"/>
<dbReference type="Proteomes" id="UP000005640">
    <property type="component" value="Chromosome 1"/>
</dbReference>
<dbReference type="RNAct" id="P01222">
    <property type="molecule type" value="protein"/>
</dbReference>
<dbReference type="Bgee" id="ENSG00000134200">
    <property type="expression patterns" value="Expressed in adenohypophysis and 111 other cell types or tissues"/>
</dbReference>
<dbReference type="GO" id="GO:0005737">
    <property type="term" value="C:cytoplasm"/>
    <property type="evidence" value="ECO:0000318"/>
    <property type="project" value="GO_Central"/>
</dbReference>
<dbReference type="GO" id="GO:0005576">
    <property type="term" value="C:extracellular region"/>
    <property type="evidence" value="ECO:0000304"/>
    <property type="project" value="Reactome"/>
</dbReference>
<dbReference type="GO" id="GO:0005615">
    <property type="term" value="C:extracellular space"/>
    <property type="evidence" value="ECO:0000318"/>
    <property type="project" value="GO_Central"/>
</dbReference>
<dbReference type="GO" id="GO:0005179">
    <property type="term" value="F:hormone activity"/>
    <property type="evidence" value="ECO:0000304"/>
    <property type="project" value="ProtInc"/>
</dbReference>
<dbReference type="GO" id="GO:0009653">
    <property type="term" value="P:anatomical structure morphogenesis"/>
    <property type="evidence" value="ECO:0000304"/>
    <property type="project" value="ProtInc"/>
</dbReference>
<dbReference type="GO" id="GO:0007267">
    <property type="term" value="P:cell-cell signaling"/>
    <property type="evidence" value="ECO:0000304"/>
    <property type="project" value="ProtInc"/>
</dbReference>
<dbReference type="GO" id="GO:0007186">
    <property type="term" value="P:G protein-coupled receptor signaling pathway"/>
    <property type="evidence" value="ECO:0000318"/>
    <property type="project" value="GO_Central"/>
</dbReference>
<dbReference type="CDD" id="cd00069">
    <property type="entry name" value="GHB_like"/>
    <property type="match status" value="1"/>
</dbReference>
<dbReference type="FunFam" id="2.10.90.10:FF:000007">
    <property type="entry name" value="Luteinizing hormone beta subunit"/>
    <property type="match status" value="1"/>
</dbReference>
<dbReference type="Gene3D" id="2.10.90.10">
    <property type="entry name" value="Cystine-knot cytokines"/>
    <property type="match status" value="1"/>
</dbReference>
<dbReference type="InterPro" id="IPR029034">
    <property type="entry name" value="Cystine-knot_cytokine"/>
</dbReference>
<dbReference type="InterPro" id="IPR006208">
    <property type="entry name" value="Glyco_hormone_CN"/>
</dbReference>
<dbReference type="InterPro" id="IPR001545">
    <property type="entry name" value="Gonadotropin_bsu"/>
</dbReference>
<dbReference type="InterPro" id="IPR018245">
    <property type="entry name" value="Gonadotropin_bsu_CS"/>
</dbReference>
<dbReference type="PANTHER" id="PTHR11515">
    <property type="entry name" value="GLYCOPROTEIN HORMONE BETA CHAIN"/>
    <property type="match status" value="1"/>
</dbReference>
<dbReference type="PANTHER" id="PTHR11515:SF5">
    <property type="entry name" value="THYROTROPIN SUBUNIT BETA"/>
    <property type="match status" value="1"/>
</dbReference>
<dbReference type="Pfam" id="PF00007">
    <property type="entry name" value="Cys_knot"/>
    <property type="match status" value="1"/>
</dbReference>
<dbReference type="SMART" id="SM00068">
    <property type="entry name" value="GHB"/>
    <property type="match status" value="1"/>
</dbReference>
<dbReference type="SUPFAM" id="SSF57501">
    <property type="entry name" value="Cystine-knot cytokines"/>
    <property type="match status" value="1"/>
</dbReference>
<dbReference type="PROSITE" id="PS00261">
    <property type="entry name" value="GLYCO_HORMONE_BETA_1"/>
    <property type="match status" value="1"/>
</dbReference>
<dbReference type="PROSITE" id="PS00689">
    <property type="entry name" value="GLYCO_HORMONE_BETA_2"/>
    <property type="match status" value="1"/>
</dbReference>